<keyword id="KW-1185">Reference proteome</keyword>
<keyword id="KW-1277">Toxin-antitoxin system</keyword>
<dbReference type="EMBL" id="L77117">
    <property type="protein sequence ID" value="AAB99313.1"/>
    <property type="molecule type" value="Genomic_DNA"/>
</dbReference>
<dbReference type="PIR" id="G64462">
    <property type="entry name" value="G64462"/>
</dbReference>
<dbReference type="RefSeq" id="WP_010870821.1">
    <property type="nucleotide sequence ID" value="NC_000909.1"/>
</dbReference>
<dbReference type="SMR" id="Q58700"/>
<dbReference type="STRING" id="243232.MJ_1304"/>
<dbReference type="PaxDb" id="243232-MJ_1304"/>
<dbReference type="EnsemblBacteria" id="AAB99313">
    <property type="protein sequence ID" value="AAB99313"/>
    <property type="gene ID" value="MJ_1304"/>
</dbReference>
<dbReference type="GeneID" id="1452206"/>
<dbReference type="KEGG" id="mja:MJ_1304"/>
<dbReference type="eggNOG" id="arCOG01191">
    <property type="taxonomic scope" value="Archaea"/>
</dbReference>
<dbReference type="HOGENOM" id="CLU_123170_2_2_2"/>
<dbReference type="InParanoid" id="Q58700"/>
<dbReference type="OrthoDB" id="359241at2157"/>
<dbReference type="PhylomeDB" id="Q58700"/>
<dbReference type="Proteomes" id="UP000000805">
    <property type="component" value="Chromosome"/>
</dbReference>
<dbReference type="Gene3D" id="1.20.120.330">
    <property type="entry name" value="Nucleotidyltransferases domain 2"/>
    <property type="match status" value="1"/>
</dbReference>
<dbReference type="InterPro" id="IPR007842">
    <property type="entry name" value="HEPN_dom"/>
</dbReference>
<dbReference type="Pfam" id="PF05168">
    <property type="entry name" value="HEPN"/>
    <property type="match status" value="1"/>
</dbReference>
<dbReference type="SMART" id="SM00748">
    <property type="entry name" value="HEPN"/>
    <property type="match status" value="1"/>
</dbReference>
<dbReference type="SUPFAM" id="SSF81593">
    <property type="entry name" value="Nucleotidyltransferase substrate binding subunit/domain"/>
    <property type="match status" value="1"/>
</dbReference>
<dbReference type="PROSITE" id="PS50910">
    <property type="entry name" value="HEPN"/>
    <property type="match status" value="1"/>
</dbReference>
<gene>
    <name type="ordered locus">MJ1304</name>
</gene>
<accession>Q58700</accession>
<feature type="chain" id="PRO_0000107262" description="Putative toxin MJ1304">
    <location>
        <begin position="1"/>
        <end position="152"/>
    </location>
</feature>
<feature type="domain" description="HEPN" evidence="1">
    <location>
        <begin position="15"/>
        <end position="135"/>
    </location>
</feature>
<comment type="function">
    <text evidence="2">Putative toxin component of a putative type VII toxin-antitoxin (TA) system. Its cognate antitoxin might be MJ1305.</text>
</comment>
<organism>
    <name type="scientific">Methanocaldococcus jannaschii (strain ATCC 43067 / DSM 2661 / JAL-1 / JCM 10045 / NBRC 100440)</name>
    <name type="common">Methanococcus jannaschii</name>
    <dbReference type="NCBI Taxonomy" id="243232"/>
    <lineage>
        <taxon>Archaea</taxon>
        <taxon>Methanobacteriati</taxon>
        <taxon>Methanobacteriota</taxon>
        <taxon>Methanomada group</taxon>
        <taxon>Methanococci</taxon>
        <taxon>Methanococcales</taxon>
        <taxon>Methanocaldococcaceae</taxon>
        <taxon>Methanocaldococcus</taxon>
    </lineage>
</organism>
<reference key="1">
    <citation type="journal article" date="1996" name="Science">
        <title>Complete genome sequence of the methanogenic archaeon, Methanococcus jannaschii.</title>
        <authorList>
            <person name="Bult C.J."/>
            <person name="White O."/>
            <person name="Olsen G.J."/>
            <person name="Zhou L."/>
            <person name="Fleischmann R.D."/>
            <person name="Sutton G.G."/>
            <person name="Blake J.A."/>
            <person name="FitzGerald L.M."/>
            <person name="Clayton R.A."/>
            <person name="Gocayne J.D."/>
            <person name="Kerlavage A.R."/>
            <person name="Dougherty B.A."/>
            <person name="Tomb J.-F."/>
            <person name="Adams M.D."/>
            <person name="Reich C.I."/>
            <person name="Overbeek R."/>
            <person name="Kirkness E.F."/>
            <person name="Weinstock K.G."/>
            <person name="Merrick J.M."/>
            <person name="Glodek A."/>
            <person name="Scott J.L."/>
            <person name="Geoghagen N.S.M."/>
            <person name="Weidman J.F."/>
            <person name="Fuhrmann J.L."/>
            <person name="Nguyen D."/>
            <person name="Utterback T.R."/>
            <person name="Kelley J.M."/>
            <person name="Peterson J.D."/>
            <person name="Sadow P.W."/>
            <person name="Hanna M.C."/>
            <person name="Cotton M.D."/>
            <person name="Roberts K.M."/>
            <person name="Hurst M.A."/>
            <person name="Kaine B.P."/>
            <person name="Borodovsky M."/>
            <person name="Klenk H.-P."/>
            <person name="Fraser C.M."/>
            <person name="Smith H.O."/>
            <person name="Woese C.R."/>
            <person name="Venter J.C."/>
        </authorList>
    </citation>
    <scope>NUCLEOTIDE SEQUENCE [LARGE SCALE GENOMIC DNA]</scope>
    <source>
        <strain>ATCC 43067 / DSM 2661 / JAL-1 / JCM 10045 / NBRC 100440</strain>
    </source>
</reference>
<name>Y1304_METJA</name>
<protein>
    <recommendedName>
        <fullName>Putative toxin MJ1304</fullName>
    </recommendedName>
</protein>
<proteinExistence type="predicted"/>
<evidence type="ECO:0000255" key="1">
    <source>
        <dbReference type="PROSITE-ProRule" id="PRU00105"/>
    </source>
</evidence>
<evidence type="ECO:0000305" key="2"/>
<sequence length="152" mass="18008">MEDSGFNIKYAKLFIKRAEEDLEVAKVLLKTNHYPDSVYHSQQCVEKAVKAVLILNGIIFRRHVVSGVFRNVIYEMKIEDSWKEKLLNLIPKIESLEEHWVMPRYPEPYFGELWNPLEEYTKEDAEECLKDAENVLEVIKDFLKEKYGLKQI</sequence>